<gene>
    <name type="primary">rot1</name>
    <name type="ORF">AO090005000464</name>
</gene>
<dbReference type="EMBL" id="BA000049">
    <property type="protein sequence ID" value="BAE55526.1"/>
    <property type="status" value="ALT_SEQ"/>
    <property type="molecule type" value="Genomic_DNA"/>
</dbReference>
<dbReference type="STRING" id="510516.Q2USD9"/>
<dbReference type="GlyCosmos" id="Q2USD9">
    <property type="glycosylation" value="3 sites, No reported glycans"/>
</dbReference>
<dbReference type="Proteomes" id="UP000006564">
    <property type="component" value="Chromosome 1"/>
</dbReference>
<dbReference type="GO" id="GO:0005789">
    <property type="term" value="C:endoplasmic reticulum membrane"/>
    <property type="evidence" value="ECO:0007669"/>
    <property type="project" value="UniProtKB-SubCell"/>
</dbReference>
<dbReference type="GO" id="GO:0051082">
    <property type="term" value="F:unfolded protein binding"/>
    <property type="evidence" value="ECO:0007669"/>
    <property type="project" value="TreeGrafter"/>
</dbReference>
<dbReference type="GO" id="GO:0006458">
    <property type="term" value="P:'de novo' protein folding"/>
    <property type="evidence" value="ECO:0007669"/>
    <property type="project" value="InterPro"/>
</dbReference>
<dbReference type="InterPro" id="IPR019623">
    <property type="entry name" value="Rot1"/>
</dbReference>
<dbReference type="PANTHER" id="PTHR28090">
    <property type="entry name" value="PROTEIN ROT1"/>
    <property type="match status" value="1"/>
</dbReference>
<dbReference type="PANTHER" id="PTHR28090:SF1">
    <property type="entry name" value="PROTEIN ROT1"/>
    <property type="match status" value="1"/>
</dbReference>
<dbReference type="Pfam" id="PF10681">
    <property type="entry name" value="Rot1"/>
    <property type="match status" value="1"/>
</dbReference>
<dbReference type="PIRSF" id="PIRSF017290">
    <property type="entry name" value="ROT1_prd"/>
    <property type="match status" value="1"/>
</dbReference>
<feature type="signal peptide" evidence="2">
    <location>
        <begin position="1"/>
        <end position="17"/>
    </location>
</feature>
<feature type="chain" id="PRO_0000333404" description="Protein rot1">
    <location>
        <begin position="18"/>
        <end position="232"/>
    </location>
</feature>
<feature type="topological domain" description="Lumenal" evidence="2">
    <location>
        <begin position="18"/>
        <end position="213"/>
    </location>
</feature>
<feature type="transmembrane region" description="Helical" evidence="2">
    <location>
        <begin position="214"/>
        <end position="231"/>
    </location>
</feature>
<feature type="topological domain" description="Cytoplasmic" evidence="2">
    <location>
        <position position="232"/>
    </location>
</feature>
<feature type="glycosylation site" description="N-linked (GlcNAc...) asparagine" evidence="2">
    <location>
        <position position="52"/>
    </location>
</feature>
<feature type="glycosylation site" description="N-linked (GlcNAc...) asparagine" evidence="2">
    <location>
        <position position="130"/>
    </location>
</feature>
<feature type="glycosylation site" description="N-linked (GlcNAc...) asparagine" evidence="2">
    <location>
        <position position="136"/>
    </location>
</feature>
<comment type="function">
    <text evidence="1">Required for normal levels of the cell wall 1,6-beta-glucan. Involved in a protein folding machinery chaperoning proteins acting in various physiological processes including cell wall synthesis and lysis of autophagic bodies (By similarity).</text>
</comment>
<comment type="subcellular location">
    <subcellularLocation>
        <location evidence="1">Endoplasmic reticulum membrane</location>
        <topology evidence="1">Single-pass type I membrane protein</topology>
    </subcellularLocation>
</comment>
<comment type="similarity">
    <text evidence="3">Belongs to the ROT1 family.</text>
</comment>
<comment type="sequence caution" evidence="3">
    <conflict type="erroneous gene model prediction">
        <sequence resource="EMBL-CDS" id="BAE55526"/>
    </conflict>
</comment>
<name>ROT1_ASPOR</name>
<sequence>MLARYFSLSLLATAVSAASISDLVGTWSTKSRKVVTGPDFYDPINDKFLEPNLTGISYSFTEDGHYEEAYYRAVANPVNPSCPKGIMQWQHGKFVLNSDGSLELTPIASDGRQLVSDPCSSSLATYTRYNQTETFNVSKDPYHGIQRLDLKRFDDSPMHPMYLVYQPPQMLPTTTLNPVSETGKSKRHVARDTDRLPGVRNLITKEELTNPDRWLWVGVFATALGGITLFYS</sequence>
<proteinExistence type="inferred from homology"/>
<reference key="1">
    <citation type="journal article" date="2005" name="Nature">
        <title>Genome sequencing and analysis of Aspergillus oryzae.</title>
        <authorList>
            <person name="Machida M."/>
            <person name="Asai K."/>
            <person name="Sano M."/>
            <person name="Tanaka T."/>
            <person name="Kumagai T."/>
            <person name="Terai G."/>
            <person name="Kusumoto K."/>
            <person name="Arima T."/>
            <person name="Akita O."/>
            <person name="Kashiwagi Y."/>
            <person name="Abe K."/>
            <person name="Gomi K."/>
            <person name="Horiuchi H."/>
            <person name="Kitamoto K."/>
            <person name="Kobayashi T."/>
            <person name="Takeuchi M."/>
            <person name="Denning D.W."/>
            <person name="Galagan J.E."/>
            <person name="Nierman W.C."/>
            <person name="Yu J."/>
            <person name="Archer D.B."/>
            <person name="Bennett J.W."/>
            <person name="Bhatnagar D."/>
            <person name="Cleveland T.E."/>
            <person name="Fedorova N.D."/>
            <person name="Gotoh O."/>
            <person name="Horikawa H."/>
            <person name="Hosoyama A."/>
            <person name="Ichinomiya M."/>
            <person name="Igarashi R."/>
            <person name="Iwashita K."/>
            <person name="Juvvadi P.R."/>
            <person name="Kato M."/>
            <person name="Kato Y."/>
            <person name="Kin T."/>
            <person name="Kokubun A."/>
            <person name="Maeda H."/>
            <person name="Maeyama N."/>
            <person name="Maruyama J."/>
            <person name="Nagasaki H."/>
            <person name="Nakajima T."/>
            <person name="Oda K."/>
            <person name="Okada K."/>
            <person name="Paulsen I."/>
            <person name="Sakamoto K."/>
            <person name="Sawano T."/>
            <person name="Takahashi M."/>
            <person name="Takase K."/>
            <person name="Terabayashi Y."/>
            <person name="Wortman J.R."/>
            <person name="Yamada O."/>
            <person name="Yamagata Y."/>
            <person name="Anazawa H."/>
            <person name="Hata Y."/>
            <person name="Koide Y."/>
            <person name="Komori T."/>
            <person name="Koyama Y."/>
            <person name="Minetoki T."/>
            <person name="Suharnan S."/>
            <person name="Tanaka A."/>
            <person name="Isono K."/>
            <person name="Kuhara S."/>
            <person name="Ogasawara N."/>
            <person name="Kikuchi H."/>
        </authorList>
    </citation>
    <scope>NUCLEOTIDE SEQUENCE [LARGE SCALE GENOMIC DNA]</scope>
    <source>
        <strain>ATCC 42149 / RIB 40</strain>
    </source>
</reference>
<evidence type="ECO:0000250" key="1"/>
<evidence type="ECO:0000255" key="2"/>
<evidence type="ECO:0000305" key="3"/>
<accession>Q2USD9</accession>
<organism>
    <name type="scientific">Aspergillus oryzae (strain ATCC 42149 / RIB 40)</name>
    <name type="common">Yellow koji mold</name>
    <dbReference type="NCBI Taxonomy" id="510516"/>
    <lineage>
        <taxon>Eukaryota</taxon>
        <taxon>Fungi</taxon>
        <taxon>Dikarya</taxon>
        <taxon>Ascomycota</taxon>
        <taxon>Pezizomycotina</taxon>
        <taxon>Eurotiomycetes</taxon>
        <taxon>Eurotiomycetidae</taxon>
        <taxon>Eurotiales</taxon>
        <taxon>Aspergillaceae</taxon>
        <taxon>Aspergillus</taxon>
        <taxon>Aspergillus subgen. Circumdati</taxon>
    </lineage>
</organism>
<protein>
    <recommendedName>
        <fullName>Protein rot1</fullName>
    </recommendedName>
</protein>
<keyword id="KW-0256">Endoplasmic reticulum</keyword>
<keyword id="KW-0325">Glycoprotein</keyword>
<keyword id="KW-0472">Membrane</keyword>
<keyword id="KW-1185">Reference proteome</keyword>
<keyword id="KW-0732">Signal</keyword>
<keyword id="KW-0812">Transmembrane</keyword>
<keyword id="KW-1133">Transmembrane helix</keyword>